<proteinExistence type="inferred from homology"/>
<organism>
    <name type="scientific">Klebsiella pneumoniae subsp. pneumoniae (strain ATCC 700721 / MGH 78578)</name>
    <dbReference type="NCBI Taxonomy" id="272620"/>
    <lineage>
        <taxon>Bacteria</taxon>
        <taxon>Pseudomonadati</taxon>
        <taxon>Pseudomonadota</taxon>
        <taxon>Gammaproteobacteria</taxon>
        <taxon>Enterobacterales</taxon>
        <taxon>Enterobacteriaceae</taxon>
        <taxon>Klebsiella/Raoultella group</taxon>
        <taxon>Klebsiella</taxon>
        <taxon>Klebsiella pneumoniae complex</taxon>
    </lineage>
</organism>
<gene>
    <name evidence="2" type="primary">folE</name>
    <name type="ordered locus">KPN78578_25480</name>
    <name type="ORF">KPN_02591</name>
</gene>
<accession>A6TBN8</accession>
<sequence>MSSLSKEAVLVHEALVARGLETPMRAPVQEIDNETRKRLITGHMTEIMQLLNLDLSDDSLMETPHRIAKMYVDEIFSGLDYSRFPKITVIENKMKVDEMVTVRDITLTSTCEHHFVTIDGKATVAYIPKDSVIGLSKINRIVQFFAQRPQVQERLTQQILIALQTLLGTNNVAVSIDAVHYCVKARGIRDATSATTTTSLGGLFKSSQNTRQEFLRAVRHHD</sequence>
<feature type="chain" id="PRO_1000043702" description="GTP cyclohydrolase 1">
    <location>
        <begin position="1"/>
        <end position="222"/>
    </location>
</feature>
<feature type="binding site" evidence="2">
    <location>
        <position position="111"/>
    </location>
    <ligand>
        <name>Zn(2+)</name>
        <dbReference type="ChEBI" id="CHEBI:29105"/>
    </ligand>
</feature>
<feature type="binding site" evidence="2">
    <location>
        <position position="114"/>
    </location>
    <ligand>
        <name>Zn(2+)</name>
        <dbReference type="ChEBI" id="CHEBI:29105"/>
    </ligand>
</feature>
<feature type="binding site" evidence="2">
    <location>
        <position position="182"/>
    </location>
    <ligand>
        <name>Zn(2+)</name>
        <dbReference type="ChEBI" id="CHEBI:29105"/>
    </ligand>
</feature>
<name>GCH1_KLEP7</name>
<reference key="1">
    <citation type="submission" date="2006-09" db="EMBL/GenBank/DDBJ databases">
        <authorList>
            <consortium name="The Klebsiella pneumonia Genome Sequencing Project"/>
            <person name="McClelland M."/>
            <person name="Sanderson E.K."/>
            <person name="Spieth J."/>
            <person name="Clifton W.S."/>
            <person name="Latreille P."/>
            <person name="Sabo A."/>
            <person name="Pepin K."/>
            <person name="Bhonagiri V."/>
            <person name="Porwollik S."/>
            <person name="Ali J."/>
            <person name="Wilson R.K."/>
        </authorList>
    </citation>
    <scope>NUCLEOTIDE SEQUENCE [LARGE SCALE GENOMIC DNA]</scope>
    <source>
        <strain>ATCC 700721 / MGH 78578</strain>
    </source>
</reference>
<keyword id="KW-0342">GTP-binding</keyword>
<keyword id="KW-0378">Hydrolase</keyword>
<keyword id="KW-0479">Metal-binding</keyword>
<keyword id="KW-0547">Nucleotide-binding</keyword>
<keyword id="KW-0554">One-carbon metabolism</keyword>
<keyword id="KW-0862">Zinc</keyword>
<dbReference type="EC" id="3.5.4.16" evidence="2"/>
<dbReference type="EMBL" id="CP000647">
    <property type="protein sequence ID" value="ABR78009.1"/>
    <property type="molecule type" value="Genomic_DNA"/>
</dbReference>
<dbReference type="RefSeq" id="WP_004184878.1">
    <property type="nucleotide sequence ID" value="NC_009648.1"/>
</dbReference>
<dbReference type="SMR" id="A6TBN8"/>
<dbReference type="STRING" id="272620.KPN_02591"/>
<dbReference type="jPOST" id="A6TBN8"/>
<dbReference type="PaxDb" id="272620-KPN_02591"/>
<dbReference type="EnsemblBacteria" id="ABR78009">
    <property type="protein sequence ID" value="ABR78009"/>
    <property type="gene ID" value="KPN_02591"/>
</dbReference>
<dbReference type="KEGG" id="kpn:KPN_02591"/>
<dbReference type="HOGENOM" id="CLU_049768_3_2_6"/>
<dbReference type="UniPathway" id="UPA00848">
    <property type="reaction ID" value="UER00151"/>
</dbReference>
<dbReference type="Proteomes" id="UP000000265">
    <property type="component" value="Chromosome"/>
</dbReference>
<dbReference type="GO" id="GO:0005737">
    <property type="term" value="C:cytoplasm"/>
    <property type="evidence" value="ECO:0007669"/>
    <property type="project" value="TreeGrafter"/>
</dbReference>
<dbReference type="GO" id="GO:0005525">
    <property type="term" value="F:GTP binding"/>
    <property type="evidence" value="ECO:0007669"/>
    <property type="project" value="UniProtKB-KW"/>
</dbReference>
<dbReference type="GO" id="GO:0003934">
    <property type="term" value="F:GTP cyclohydrolase I activity"/>
    <property type="evidence" value="ECO:0007669"/>
    <property type="project" value="UniProtKB-UniRule"/>
</dbReference>
<dbReference type="GO" id="GO:0008270">
    <property type="term" value="F:zinc ion binding"/>
    <property type="evidence" value="ECO:0007669"/>
    <property type="project" value="UniProtKB-UniRule"/>
</dbReference>
<dbReference type="GO" id="GO:0006730">
    <property type="term" value="P:one-carbon metabolic process"/>
    <property type="evidence" value="ECO:0007669"/>
    <property type="project" value="UniProtKB-UniRule"/>
</dbReference>
<dbReference type="GO" id="GO:0006729">
    <property type="term" value="P:tetrahydrobiopterin biosynthetic process"/>
    <property type="evidence" value="ECO:0007669"/>
    <property type="project" value="TreeGrafter"/>
</dbReference>
<dbReference type="GO" id="GO:0046654">
    <property type="term" value="P:tetrahydrofolate biosynthetic process"/>
    <property type="evidence" value="ECO:0007669"/>
    <property type="project" value="UniProtKB-UniRule"/>
</dbReference>
<dbReference type="FunFam" id="1.10.286.10:FF:000002">
    <property type="entry name" value="GTP cyclohydrolase 1"/>
    <property type="match status" value="1"/>
</dbReference>
<dbReference type="FunFam" id="3.30.1130.10:FF:000001">
    <property type="entry name" value="GTP cyclohydrolase 1"/>
    <property type="match status" value="1"/>
</dbReference>
<dbReference type="Gene3D" id="1.10.286.10">
    <property type="match status" value="1"/>
</dbReference>
<dbReference type="Gene3D" id="3.30.1130.10">
    <property type="match status" value="1"/>
</dbReference>
<dbReference type="HAMAP" id="MF_00223">
    <property type="entry name" value="FolE"/>
    <property type="match status" value="1"/>
</dbReference>
<dbReference type="InterPro" id="IPR043133">
    <property type="entry name" value="GTP-CH-I_C/QueF"/>
</dbReference>
<dbReference type="InterPro" id="IPR043134">
    <property type="entry name" value="GTP-CH-I_N"/>
</dbReference>
<dbReference type="InterPro" id="IPR001474">
    <property type="entry name" value="GTP_CycHdrlase_I"/>
</dbReference>
<dbReference type="InterPro" id="IPR018234">
    <property type="entry name" value="GTP_CycHdrlase_I_CS"/>
</dbReference>
<dbReference type="InterPro" id="IPR020602">
    <property type="entry name" value="GTP_CycHdrlase_I_dom"/>
</dbReference>
<dbReference type="NCBIfam" id="TIGR00063">
    <property type="entry name" value="folE"/>
    <property type="match status" value="1"/>
</dbReference>
<dbReference type="NCBIfam" id="NF006824">
    <property type="entry name" value="PRK09347.1-1"/>
    <property type="match status" value="1"/>
</dbReference>
<dbReference type="NCBIfam" id="NF006826">
    <property type="entry name" value="PRK09347.1-3"/>
    <property type="match status" value="1"/>
</dbReference>
<dbReference type="PANTHER" id="PTHR11109:SF7">
    <property type="entry name" value="GTP CYCLOHYDROLASE 1"/>
    <property type="match status" value="1"/>
</dbReference>
<dbReference type="PANTHER" id="PTHR11109">
    <property type="entry name" value="GTP CYCLOHYDROLASE I"/>
    <property type="match status" value="1"/>
</dbReference>
<dbReference type="Pfam" id="PF01227">
    <property type="entry name" value="GTP_cyclohydroI"/>
    <property type="match status" value="1"/>
</dbReference>
<dbReference type="SUPFAM" id="SSF55620">
    <property type="entry name" value="Tetrahydrobiopterin biosynthesis enzymes-like"/>
    <property type="match status" value="1"/>
</dbReference>
<dbReference type="PROSITE" id="PS00859">
    <property type="entry name" value="GTP_CYCLOHYDROL_1_1"/>
    <property type="match status" value="1"/>
</dbReference>
<dbReference type="PROSITE" id="PS00860">
    <property type="entry name" value="GTP_CYCLOHYDROL_1_2"/>
    <property type="match status" value="1"/>
</dbReference>
<protein>
    <recommendedName>
        <fullName evidence="2">GTP cyclohydrolase 1</fullName>
        <ecNumber evidence="2">3.5.4.16</ecNumber>
    </recommendedName>
    <alternativeName>
        <fullName evidence="2">GTP cyclohydrolase I</fullName>
        <shortName evidence="2">GTP-CH-I</shortName>
    </alternativeName>
</protein>
<comment type="catalytic activity">
    <reaction evidence="2">
        <text>GTP + H2O = 7,8-dihydroneopterin 3'-triphosphate + formate + H(+)</text>
        <dbReference type="Rhea" id="RHEA:17473"/>
        <dbReference type="ChEBI" id="CHEBI:15377"/>
        <dbReference type="ChEBI" id="CHEBI:15378"/>
        <dbReference type="ChEBI" id="CHEBI:15740"/>
        <dbReference type="ChEBI" id="CHEBI:37565"/>
        <dbReference type="ChEBI" id="CHEBI:58462"/>
        <dbReference type="EC" id="3.5.4.16"/>
    </reaction>
</comment>
<comment type="pathway">
    <text evidence="2">Cofactor biosynthesis; 7,8-dihydroneopterin triphosphate biosynthesis; 7,8-dihydroneopterin triphosphate from GTP: step 1/1.</text>
</comment>
<comment type="subunit">
    <text evidence="1">Toroid-shaped homodecamer, composed of two pentamers of five dimers.</text>
</comment>
<comment type="similarity">
    <text evidence="2">Belongs to the GTP cyclohydrolase I family.</text>
</comment>
<evidence type="ECO:0000250" key="1"/>
<evidence type="ECO:0000255" key="2">
    <source>
        <dbReference type="HAMAP-Rule" id="MF_00223"/>
    </source>
</evidence>